<protein>
    <recommendedName>
        <fullName evidence="2">Facilitated trehalose transporter Tret1-2 homolog</fullName>
    </recommendedName>
</protein>
<sequence>MKILMRADTHVSYSVPAEGPKANFTFSQVLAALSVSLCSLVVGFVSAYTSPALVSMTDRTITSFEVTKDAGSWVGGIMPLAALAGGITGGPLIEYLGRRTTILATAVPFIVSSLLIACAVNVIMILCGRFLTGFCVGIASLSLPVYLGETLQPEVRGTLGLLPTALGNIGILVCYVAGSFMNWSMLAFLGAALPVPFLILMIIIPETPRWFVNRGQEERARKALKWLRGKEADVEPELKDLMQSQAEADSQARRNTCLELFKRINLKPLSISLGLMFFQQFSGINAVIFYTVQIFKDAGSTIDSNLCTIIVGIVNFFATFMGILLIDRLGRKILLYISDIAMILTLSILGGFFYCKAHGPDVSHLGWLPLTCFVIYILGFSLGFGPIPWLMMGEILPAKIRGPAASVVTAFNWFCTFVVTKTFQDLTVAMGAHGAFWLFGVVCIVGLFFVIICVPETRGKSLEEIERKMMGRVPISAVVNIKPFSFNM</sequence>
<proteinExistence type="inferred from homology"/>
<keyword id="KW-1003">Cell membrane</keyword>
<keyword id="KW-0325">Glycoprotein</keyword>
<keyword id="KW-0472">Membrane</keyword>
<keyword id="KW-1185">Reference proteome</keyword>
<keyword id="KW-0812">Transmembrane</keyword>
<keyword id="KW-1133">Transmembrane helix</keyword>
<dbReference type="EMBL" id="CM000362">
    <property type="protein sequence ID" value="EDX06650.1"/>
    <property type="molecule type" value="Genomic_DNA"/>
</dbReference>
<dbReference type="SMR" id="B4QBN3"/>
<dbReference type="STRING" id="7240.B4QBN3"/>
<dbReference type="GlyCosmos" id="B4QBN3">
    <property type="glycosylation" value="1 site, No reported glycans"/>
</dbReference>
<dbReference type="EnsemblMetazoa" id="FBtr0210718">
    <property type="protein sequence ID" value="FBpp0209210"/>
    <property type="gene ID" value="FBgn0182571"/>
</dbReference>
<dbReference type="EnsemblMetazoa" id="XM_002081029.4">
    <property type="protein sequence ID" value="XP_002081065.1"/>
    <property type="gene ID" value="LOC6734029"/>
</dbReference>
<dbReference type="GeneID" id="6734029"/>
<dbReference type="CTD" id="36249"/>
<dbReference type="HOGENOM" id="CLU_001265_30_5_1"/>
<dbReference type="OMA" id="AISMIYV"/>
<dbReference type="OrthoDB" id="6339427at2759"/>
<dbReference type="PhylomeDB" id="B4QBN3"/>
<dbReference type="Proteomes" id="UP000000304">
    <property type="component" value="Chromosome 2R"/>
</dbReference>
<dbReference type="Bgee" id="FBgn0182571">
    <property type="expression patterns" value="Expressed in female reproductive system and 3 other cell types or tissues"/>
</dbReference>
<dbReference type="GO" id="GO:0005886">
    <property type="term" value="C:plasma membrane"/>
    <property type="evidence" value="ECO:0000250"/>
    <property type="project" value="UniProtKB"/>
</dbReference>
<dbReference type="GO" id="GO:0051119">
    <property type="term" value="F:sugar transmembrane transporter activity"/>
    <property type="evidence" value="ECO:0007669"/>
    <property type="project" value="InterPro"/>
</dbReference>
<dbReference type="CDD" id="cd17358">
    <property type="entry name" value="MFS_GLUT6_8_Class3_like"/>
    <property type="match status" value="1"/>
</dbReference>
<dbReference type="FunFam" id="1.20.1250.20:FF:000055">
    <property type="entry name" value="Facilitated trehalose transporter Tret1-2 homolog"/>
    <property type="match status" value="1"/>
</dbReference>
<dbReference type="Gene3D" id="1.20.1250.20">
    <property type="entry name" value="MFS general substrate transporter like domains"/>
    <property type="match status" value="1"/>
</dbReference>
<dbReference type="InterPro" id="IPR020846">
    <property type="entry name" value="MFS_dom"/>
</dbReference>
<dbReference type="InterPro" id="IPR044775">
    <property type="entry name" value="MFS_ERD6/Tret1-like"/>
</dbReference>
<dbReference type="InterPro" id="IPR005828">
    <property type="entry name" value="MFS_sugar_transport-like"/>
</dbReference>
<dbReference type="InterPro" id="IPR036259">
    <property type="entry name" value="MFS_trans_sf"/>
</dbReference>
<dbReference type="InterPro" id="IPR050549">
    <property type="entry name" value="MFS_Trehalose_Transporter"/>
</dbReference>
<dbReference type="InterPro" id="IPR003663">
    <property type="entry name" value="Sugar/inositol_transpt"/>
</dbReference>
<dbReference type="InterPro" id="IPR005829">
    <property type="entry name" value="Sugar_transporter_CS"/>
</dbReference>
<dbReference type="NCBIfam" id="TIGR00879">
    <property type="entry name" value="SP"/>
    <property type="match status" value="1"/>
</dbReference>
<dbReference type="PANTHER" id="PTHR48021">
    <property type="match status" value="1"/>
</dbReference>
<dbReference type="PANTHER" id="PTHR48021:SF96">
    <property type="entry name" value="FACILITATED TREHALOSE TRANSPORTER TRET1-1-RELATED"/>
    <property type="match status" value="1"/>
</dbReference>
<dbReference type="Pfam" id="PF00083">
    <property type="entry name" value="Sugar_tr"/>
    <property type="match status" value="1"/>
</dbReference>
<dbReference type="PRINTS" id="PR00171">
    <property type="entry name" value="SUGRTRNSPORT"/>
</dbReference>
<dbReference type="SUPFAM" id="SSF103473">
    <property type="entry name" value="MFS general substrate transporter"/>
    <property type="match status" value="1"/>
</dbReference>
<dbReference type="PROSITE" id="PS50850">
    <property type="entry name" value="MFS"/>
    <property type="match status" value="1"/>
</dbReference>
<dbReference type="PROSITE" id="PS00216">
    <property type="entry name" value="SUGAR_TRANSPORT_1"/>
    <property type="match status" value="2"/>
</dbReference>
<dbReference type="PROSITE" id="PS00217">
    <property type="entry name" value="SUGAR_TRANSPORT_2"/>
    <property type="match status" value="1"/>
</dbReference>
<gene>
    <name evidence="2" type="primary">Tret1-2</name>
    <name type="ORF">GD10808</name>
</gene>
<evidence type="ECO:0000250" key="1">
    <source>
        <dbReference type="UniProtKB" id="A1Z8N1"/>
    </source>
</evidence>
<evidence type="ECO:0000250" key="2">
    <source>
        <dbReference type="UniProtKB" id="Q8MKK4"/>
    </source>
</evidence>
<evidence type="ECO:0000255" key="3"/>
<evidence type="ECO:0000312" key="4">
    <source>
        <dbReference type="EMBL" id="EDX06650.1"/>
    </source>
</evidence>
<name>TRE12_DROSI</name>
<accession>B4QBN3</accession>
<organism>
    <name type="scientific">Drosophila simulans</name>
    <name type="common">Fruit fly</name>
    <dbReference type="NCBI Taxonomy" id="7240"/>
    <lineage>
        <taxon>Eukaryota</taxon>
        <taxon>Metazoa</taxon>
        <taxon>Ecdysozoa</taxon>
        <taxon>Arthropoda</taxon>
        <taxon>Hexapoda</taxon>
        <taxon>Insecta</taxon>
        <taxon>Pterygota</taxon>
        <taxon>Neoptera</taxon>
        <taxon>Endopterygota</taxon>
        <taxon>Diptera</taxon>
        <taxon>Brachycera</taxon>
        <taxon>Muscomorpha</taxon>
        <taxon>Ephydroidea</taxon>
        <taxon>Drosophilidae</taxon>
        <taxon>Drosophila</taxon>
        <taxon>Sophophora</taxon>
    </lineage>
</organism>
<comment type="function">
    <text evidence="2">Fails to transport trehalose.</text>
</comment>
<comment type="subcellular location">
    <subcellularLocation>
        <location evidence="2 3">Cell membrane</location>
        <topology evidence="2 3">Multi-pass membrane protein</topology>
    </subcellularLocation>
</comment>
<comment type="similarity">
    <text evidence="1 3">Belongs to the major facilitator superfamily. Sugar transporter (TC 2.A.1.1) family. Trehalose transporter subfamily.</text>
</comment>
<reference evidence="4" key="1">
    <citation type="journal article" date="2007" name="Nature">
        <title>Evolution of genes and genomes on the Drosophila phylogeny.</title>
        <authorList>
            <consortium name="Drosophila 12 genomes consortium"/>
        </authorList>
    </citation>
    <scope>NUCLEOTIDE SEQUENCE [LARGE SCALE GENOMIC DNA]</scope>
</reference>
<feature type="chain" id="PRO_0000395536" description="Facilitated trehalose transporter Tret1-2 homolog">
    <location>
        <begin position="1"/>
        <end position="488"/>
    </location>
</feature>
<feature type="topological domain" description="Cytoplasmic" evidence="3">
    <location>
        <begin position="1"/>
        <end position="28"/>
    </location>
</feature>
<feature type="transmembrane region" description="Helical; Name=1" evidence="3">
    <location>
        <begin position="29"/>
        <end position="49"/>
    </location>
</feature>
<feature type="topological domain" description="Extracellular" evidence="3">
    <location>
        <begin position="50"/>
        <end position="72"/>
    </location>
</feature>
<feature type="transmembrane region" description="Helical; Name=2" evidence="3">
    <location>
        <begin position="73"/>
        <end position="93"/>
    </location>
</feature>
<feature type="topological domain" description="Cytoplasmic" evidence="3">
    <location>
        <begin position="94"/>
        <end position="105"/>
    </location>
</feature>
<feature type="transmembrane region" description="Helical; Name=3" evidence="3">
    <location>
        <begin position="106"/>
        <end position="126"/>
    </location>
</feature>
<feature type="topological domain" description="Extracellular" evidence="3">
    <location>
        <begin position="127"/>
        <end position="129"/>
    </location>
</feature>
<feature type="transmembrane region" description="Helical; Name=4" evidence="3">
    <location>
        <begin position="130"/>
        <end position="150"/>
    </location>
</feature>
<feature type="topological domain" description="Cytoplasmic" evidence="3">
    <location>
        <begin position="151"/>
        <end position="160"/>
    </location>
</feature>
<feature type="transmembrane region" description="Helical; Name=5" evidence="3">
    <location>
        <begin position="161"/>
        <end position="181"/>
    </location>
</feature>
<feature type="topological domain" description="Extracellular" evidence="3">
    <location>
        <begin position="182"/>
        <end position="184"/>
    </location>
</feature>
<feature type="transmembrane region" description="Helical; Name=6" evidence="3">
    <location>
        <begin position="185"/>
        <end position="205"/>
    </location>
</feature>
<feature type="topological domain" description="Cytoplasmic" evidence="3">
    <location>
        <begin position="206"/>
        <end position="268"/>
    </location>
</feature>
<feature type="transmembrane region" description="Helical; Name=7" evidence="3">
    <location>
        <begin position="269"/>
        <end position="289"/>
    </location>
</feature>
<feature type="topological domain" description="Extracellular" evidence="3">
    <location>
        <begin position="290"/>
        <end position="305"/>
    </location>
</feature>
<feature type="transmembrane region" description="Helical; Name=8" evidence="3">
    <location>
        <begin position="306"/>
        <end position="326"/>
    </location>
</feature>
<feature type="topological domain" description="Cytoplasmic" evidence="3">
    <location>
        <begin position="327"/>
        <end position="332"/>
    </location>
</feature>
<feature type="transmembrane region" description="Helical; Name=9" evidence="3">
    <location>
        <begin position="333"/>
        <end position="353"/>
    </location>
</feature>
<feature type="topological domain" description="Extracellular" evidence="3">
    <location>
        <begin position="354"/>
        <end position="372"/>
    </location>
</feature>
<feature type="transmembrane region" description="Helical; Name=10" evidence="3">
    <location>
        <begin position="373"/>
        <end position="393"/>
    </location>
</feature>
<feature type="topological domain" description="Cytoplasmic" evidence="3">
    <location>
        <begin position="394"/>
        <end position="402"/>
    </location>
</feature>
<feature type="transmembrane region" description="Helical; Name=11" evidence="3">
    <location>
        <begin position="403"/>
        <end position="423"/>
    </location>
</feature>
<feature type="topological domain" description="Extracellular" evidence="3">
    <location>
        <begin position="424"/>
        <end position="433"/>
    </location>
</feature>
<feature type="transmembrane region" description="Helical; Name=12" evidence="3">
    <location>
        <begin position="434"/>
        <end position="454"/>
    </location>
</feature>
<feature type="topological domain" description="Cytoplasmic" evidence="3">
    <location>
        <begin position="455"/>
        <end position="488"/>
    </location>
</feature>
<feature type="glycosylation site" description="N-linked (GlcNAc...) asparagine" evidence="3">
    <location>
        <position position="182"/>
    </location>
</feature>